<dbReference type="EC" id="7.1.1.-" evidence="1"/>
<dbReference type="EMBL" id="AM408590">
    <property type="protein sequence ID" value="CAL73158.1"/>
    <property type="molecule type" value="Genomic_DNA"/>
</dbReference>
<dbReference type="RefSeq" id="WP_003416420.1">
    <property type="nucleotide sequence ID" value="NC_008769.1"/>
</dbReference>
<dbReference type="SMR" id="A1KNE2"/>
<dbReference type="KEGG" id="mbb:BCG_3169"/>
<dbReference type="HOGENOM" id="CLU_055737_7_3_11"/>
<dbReference type="Proteomes" id="UP000001472">
    <property type="component" value="Chromosome"/>
</dbReference>
<dbReference type="GO" id="GO:0005886">
    <property type="term" value="C:plasma membrane"/>
    <property type="evidence" value="ECO:0007669"/>
    <property type="project" value="UniProtKB-SubCell"/>
</dbReference>
<dbReference type="GO" id="GO:0045271">
    <property type="term" value="C:respiratory chain complex I"/>
    <property type="evidence" value="ECO:0007669"/>
    <property type="project" value="TreeGrafter"/>
</dbReference>
<dbReference type="GO" id="GO:0051539">
    <property type="term" value="F:4 iron, 4 sulfur cluster binding"/>
    <property type="evidence" value="ECO:0007669"/>
    <property type="project" value="UniProtKB-KW"/>
</dbReference>
<dbReference type="GO" id="GO:0005506">
    <property type="term" value="F:iron ion binding"/>
    <property type="evidence" value="ECO:0007669"/>
    <property type="project" value="UniProtKB-UniRule"/>
</dbReference>
<dbReference type="GO" id="GO:0008137">
    <property type="term" value="F:NADH dehydrogenase (ubiquinone) activity"/>
    <property type="evidence" value="ECO:0007669"/>
    <property type="project" value="InterPro"/>
</dbReference>
<dbReference type="GO" id="GO:0050136">
    <property type="term" value="F:NADH:ubiquinone reductase (non-electrogenic) activity"/>
    <property type="evidence" value="ECO:0007669"/>
    <property type="project" value="UniProtKB-UniRule"/>
</dbReference>
<dbReference type="GO" id="GO:0048038">
    <property type="term" value="F:quinone binding"/>
    <property type="evidence" value="ECO:0007669"/>
    <property type="project" value="UniProtKB-KW"/>
</dbReference>
<dbReference type="GO" id="GO:0009060">
    <property type="term" value="P:aerobic respiration"/>
    <property type="evidence" value="ECO:0007669"/>
    <property type="project" value="TreeGrafter"/>
</dbReference>
<dbReference type="GO" id="GO:0015990">
    <property type="term" value="P:electron transport coupled proton transport"/>
    <property type="evidence" value="ECO:0007669"/>
    <property type="project" value="TreeGrafter"/>
</dbReference>
<dbReference type="FunFam" id="3.40.50.12280:FF:000004">
    <property type="entry name" value="NADH-quinone oxidoreductase subunit B"/>
    <property type="match status" value="1"/>
</dbReference>
<dbReference type="Gene3D" id="3.40.50.12280">
    <property type="match status" value="1"/>
</dbReference>
<dbReference type="HAMAP" id="MF_01356">
    <property type="entry name" value="NDH1_NuoB"/>
    <property type="match status" value="1"/>
</dbReference>
<dbReference type="InterPro" id="IPR006137">
    <property type="entry name" value="NADH_UbQ_OxRdtase-like_20kDa"/>
</dbReference>
<dbReference type="InterPro" id="IPR006138">
    <property type="entry name" value="NADH_UQ_OxRdtase_20Kd_su"/>
</dbReference>
<dbReference type="NCBIfam" id="TIGR01957">
    <property type="entry name" value="nuoB_fam"/>
    <property type="match status" value="1"/>
</dbReference>
<dbReference type="NCBIfam" id="NF005012">
    <property type="entry name" value="PRK06411.1"/>
    <property type="match status" value="1"/>
</dbReference>
<dbReference type="PANTHER" id="PTHR11995">
    <property type="entry name" value="NADH DEHYDROGENASE"/>
    <property type="match status" value="1"/>
</dbReference>
<dbReference type="PANTHER" id="PTHR11995:SF14">
    <property type="entry name" value="NADH DEHYDROGENASE [UBIQUINONE] IRON-SULFUR PROTEIN 7, MITOCHONDRIAL"/>
    <property type="match status" value="1"/>
</dbReference>
<dbReference type="Pfam" id="PF01058">
    <property type="entry name" value="Oxidored_q6"/>
    <property type="match status" value="1"/>
</dbReference>
<dbReference type="SUPFAM" id="SSF56770">
    <property type="entry name" value="HydA/Nqo6-like"/>
    <property type="match status" value="1"/>
</dbReference>
<dbReference type="PROSITE" id="PS01150">
    <property type="entry name" value="COMPLEX1_20K"/>
    <property type="match status" value="1"/>
</dbReference>
<proteinExistence type="inferred from homology"/>
<sequence>MGLEEQLPGGILLSTVEKVAGYVRKNSLWPATFGLACCAIEMMATAGPRFDIARFGMERFSATPRQADLMIVAGRVSQKMAPVLRQIYDQMAEPKWVLAMGVCASSGGMFNNYAIVQGVDHVVPVDIYLPGCPPRPEMLLHAILKLHEKIQQMPLGINRERAIAEAEEAALLARPTIEMRGLLR</sequence>
<comment type="function">
    <text evidence="1">NDH-1 shuttles electrons from NADH, via FMN and iron-sulfur (Fe-S) centers, to quinones in the respiratory chain. The immediate electron acceptor for the enzyme in this species is believed to be a menaquinone. Couples the redox reaction to proton translocation (for every two electrons transferred, four hydrogen ions are translocated across the cytoplasmic membrane), and thus conserves the redox energy in a proton gradient.</text>
</comment>
<comment type="catalytic activity">
    <reaction evidence="1">
        <text>a quinone + NADH + 5 H(+)(in) = a quinol + NAD(+) + 4 H(+)(out)</text>
        <dbReference type="Rhea" id="RHEA:57888"/>
        <dbReference type="ChEBI" id="CHEBI:15378"/>
        <dbReference type="ChEBI" id="CHEBI:24646"/>
        <dbReference type="ChEBI" id="CHEBI:57540"/>
        <dbReference type="ChEBI" id="CHEBI:57945"/>
        <dbReference type="ChEBI" id="CHEBI:132124"/>
    </reaction>
</comment>
<comment type="cofactor">
    <cofactor evidence="1">
        <name>[4Fe-4S] cluster</name>
        <dbReference type="ChEBI" id="CHEBI:49883"/>
    </cofactor>
    <text evidence="1">Binds 1 [4Fe-4S] cluster.</text>
</comment>
<comment type="subunit">
    <text evidence="1">NDH-1 is composed of 14 different subunits. Subunits NuoB, C, D, E, F, and G constitute the peripheral sector of the complex.</text>
</comment>
<comment type="subcellular location">
    <subcellularLocation>
        <location evidence="1">Cell membrane</location>
        <topology evidence="1">Peripheral membrane protein</topology>
        <orientation evidence="1">Cytoplasmic side</orientation>
    </subcellularLocation>
</comment>
<comment type="similarity">
    <text evidence="1">Belongs to the complex I 20 kDa subunit family.</text>
</comment>
<gene>
    <name evidence="1" type="primary">nuoB</name>
    <name type="ordered locus">BCG_3169</name>
</gene>
<accession>A1KNE2</accession>
<reference key="1">
    <citation type="journal article" date="2007" name="Proc. Natl. Acad. Sci. U.S.A.">
        <title>Genome plasticity of BCG and impact on vaccine efficacy.</title>
        <authorList>
            <person name="Brosch R."/>
            <person name="Gordon S.V."/>
            <person name="Garnier T."/>
            <person name="Eiglmeier K."/>
            <person name="Frigui W."/>
            <person name="Valenti P."/>
            <person name="Dos Santos S."/>
            <person name="Duthoy S."/>
            <person name="Lacroix C."/>
            <person name="Garcia-Pelayo C."/>
            <person name="Inwald J.K."/>
            <person name="Golby P."/>
            <person name="Garcia J.N."/>
            <person name="Hewinson R.G."/>
            <person name="Behr M.A."/>
            <person name="Quail M.A."/>
            <person name="Churcher C."/>
            <person name="Barrell B.G."/>
            <person name="Parkhill J."/>
            <person name="Cole S.T."/>
        </authorList>
    </citation>
    <scope>NUCLEOTIDE SEQUENCE [LARGE SCALE GENOMIC DNA]</scope>
    <source>
        <strain>BCG / Pasteur 1173P2</strain>
    </source>
</reference>
<evidence type="ECO:0000255" key="1">
    <source>
        <dbReference type="HAMAP-Rule" id="MF_01356"/>
    </source>
</evidence>
<protein>
    <recommendedName>
        <fullName evidence="1">NADH-quinone oxidoreductase subunit B</fullName>
        <ecNumber evidence="1">7.1.1.-</ecNumber>
    </recommendedName>
    <alternativeName>
        <fullName evidence="1">NADH dehydrogenase I subunit B</fullName>
    </alternativeName>
    <alternativeName>
        <fullName evidence="1">NDH-1 subunit B</fullName>
    </alternativeName>
</protein>
<feature type="chain" id="PRO_0000376277" description="NADH-quinone oxidoreductase subunit B">
    <location>
        <begin position="1"/>
        <end position="184"/>
    </location>
</feature>
<feature type="binding site" evidence="1">
    <location>
        <position position="37"/>
    </location>
    <ligand>
        <name>[4Fe-4S] cluster</name>
        <dbReference type="ChEBI" id="CHEBI:49883"/>
    </ligand>
</feature>
<feature type="binding site" evidence="1">
    <location>
        <position position="38"/>
    </location>
    <ligand>
        <name>[4Fe-4S] cluster</name>
        <dbReference type="ChEBI" id="CHEBI:49883"/>
    </ligand>
</feature>
<feature type="binding site" evidence="1">
    <location>
        <position position="103"/>
    </location>
    <ligand>
        <name>[4Fe-4S] cluster</name>
        <dbReference type="ChEBI" id="CHEBI:49883"/>
    </ligand>
</feature>
<feature type="binding site" evidence="1">
    <location>
        <position position="132"/>
    </location>
    <ligand>
        <name>[4Fe-4S] cluster</name>
        <dbReference type="ChEBI" id="CHEBI:49883"/>
    </ligand>
</feature>
<name>NUOB_MYCBP</name>
<keyword id="KW-0004">4Fe-4S</keyword>
<keyword id="KW-1003">Cell membrane</keyword>
<keyword id="KW-0408">Iron</keyword>
<keyword id="KW-0411">Iron-sulfur</keyword>
<keyword id="KW-0472">Membrane</keyword>
<keyword id="KW-0479">Metal-binding</keyword>
<keyword id="KW-0520">NAD</keyword>
<keyword id="KW-0874">Quinone</keyword>
<keyword id="KW-1278">Translocase</keyword>
<keyword id="KW-0813">Transport</keyword>
<organism>
    <name type="scientific">Mycobacterium bovis (strain BCG / Pasteur 1173P2)</name>
    <dbReference type="NCBI Taxonomy" id="410289"/>
    <lineage>
        <taxon>Bacteria</taxon>
        <taxon>Bacillati</taxon>
        <taxon>Actinomycetota</taxon>
        <taxon>Actinomycetes</taxon>
        <taxon>Mycobacteriales</taxon>
        <taxon>Mycobacteriaceae</taxon>
        <taxon>Mycobacterium</taxon>
        <taxon>Mycobacterium tuberculosis complex</taxon>
    </lineage>
</organism>